<evidence type="ECO:0000255" key="1">
    <source>
        <dbReference type="HAMAP-Rule" id="MF_00433"/>
    </source>
</evidence>
<gene>
    <name evidence="1" type="primary">petL</name>
</gene>
<comment type="function">
    <text evidence="1">Component of the cytochrome b6-f complex, which mediates electron transfer between photosystem II (PSII) and photosystem I (PSI), cyclic electron flow around PSI, and state transitions. PetL is important for photoautotrophic growth as well as for electron transfer efficiency and stability of the cytochrome b6-f complex.</text>
</comment>
<comment type="subunit">
    <text evidence="1">The 4 large subunits of the cytochrome b6-f complex are cytochrome b6, subunit IV (17 kDa polypeptide, PetD), cytochrome f and the Rieske protein, while the 4 small subunits are PetG, PetL, PetM and PetN. The complex functions as a dimer.</text>
</comment>
<comment type="subcellular location">
    <subcellularLocation>
        <location evidence="1">Plastid</location>
        <location evidence="1">Chloroplast thylakoid membrane</location>
        <topology evidence="1">Single-pass membrane protein</topology>
    </subcellularLocation>
</comment>
<comment type="similarity">
    <text evidence="1">Belongs to the PetL family.</text>
</comment>
<accession>A4QLL2</accession>
<geneLocation type="chloroplast"/>
<sequence length="31" mass="3401">MPTITSYFGFLLAALTITSVLFIGLSKIRLI</sequence>
<name>PETL_LOBMA</name>
<keyword id="KW-0150">Chloroplast</keyword>
<keyword id="KW-0249">Electron transport</keyword>
<keyword id="KW-0472">Membrane</keyword>
<keyword id="KW-0602">Photosynthesis</keyword>
<keyword id="KW-0934">Plastid</keyword>
<keyword id="KW-0793">Thylakoid</keyword>
<keyword id="KW-0812">Transmembrane</keyword>
<keyword id="KW-1133">Transmembrane helix</keyword>
<keyword id="KW-0813">Transport</keyword>
<organism>
    <name type="scientific">Lobularia maritima</name>
    <name type="common">Sweet alyssum</name>
    <name type="synonym">Alyssum maritimum</name>
    <dbReference type="NCBI Taxonomy" id="226051"/>
    <lineage>
        <taxon>Eukaryota</taxon>
        <taxon>Viridiplantae</taxon>
        <taxon>Streptophyta</taxon>
        <taxon>Embryophyta</taxon>
        <taxon>Tracheophyta</taxon>
        <taxon>Spermatophyta</taxon>
        <taxon>Magnoliopsida</taxon>
        <taxon>eudicotyledons</taxon>
        <taxon>Gunneridae</taxon>
        <taxon>Pentapetalae</taxon>
        <taxon>rosids</taxon>
        <taxon>malvids</taxon>
        <taxon>Brassicales</taxon>
        <taxon>Brassicaceae</taxon>
        <taxon>Anastaticeae</taxon>
        <taxon>Lobularia</taxon>
    </lineage>
</organism>
<dbReference type="EMBL" id="AP009375">
    <property type="protein sequence ID" value="BAF50567.1"/>
    <property type="molecule type" value="Genomic_DNA"/>
</dbReference>
<dbReference type="RefSeq" id="YP_001123743.1">
    <property type="nucleotide sequence ID" value="NC_009274.1"/>
</dbReference>
<dbReference type="SMR" id="A4QLL2"/>
<dbReference type="GeneID" id="4964844"/>
<dbReference type="GO" id="GO:0009535">
    <property type="term" value="C:chloroplast thylakoid membrane"/>
    <property type="evidence" value="ECO:0007669"/>
    <property type="project" value="UniProtKB-SubCell"/>
</dbReference>
<dbReference type="GO" id="GO:0009512">
    <property type="term" value="C:cytochrome b6f complex"/>
    <property type="evidence" value="ECO:0007669"/>
    <property type="project" value="InterPro"/>
</dbReference>
<dbReference type="GO" id="GO:0045158">
    <property type="term" value="F:electron transporter, transferring electrons within cytochrome b6/f complex of photosystem II activity"/>
    <property type="evidence" value="ECO:0007669"/>
    <property type="project" value="UniProtKB-UniRule"/>
</dbReference>
<dbReference type="GO" id="GO:0015979">
    <property type="term" value="P:photosynthesis"/>
    <property type="evidence" value="ECO:0007669"/>
    <property type="project" value="UniProtKB-KW"/>
</dbReference>
<dbReference type="HAMAP" id="MF_00433">
    <property type="entry name" value="Cytb6_f_PetL"/>
    <property type="match status" value="1"/>
</dbReference>
<dbReference type="InterPro" id="IPR007802">
    <property type="entry name" value="Cyt_b6/f_cplx_su6"/>
</dbReference>
<dbReference type="PANTHER" id="PTHR37266">
    <property type="entry name" value="CYTOCHROME B6-F COMPLEX SUBUNIT 6"/>
    <property type="match status" value="1"/>
</dbReference>
<dbReference type="PANTHER" id="PTHR37266:SF1">
    <property type="entry name" value="CYTOCHROME B6-F COMPLEX SUBUNIT 6"/>
    <property type="match status" value="1"/>
</dbReference>
<dbReference type="Pfam" id="PF05115">
    <property type="entry name" value="PetL"/>
    <property type="match status" value="1"/>
</dbReference>
<feature type="chain" id="PRO_0000300148" description="Cytochrome b6-f complex subunit 6">
    <location>
        <begin position="1"/>
        <end position="31"/>
    </location>
</feature>
<feature type="transmembrane region" description="Helical" evidence="1">
    <location>
        <begin position="4"/>
        <end position="24"/>
    </location>
</feature>
<proteinExistence type="inferred from homology"/>
<reference key="1">
    <citation type="submission" date="2007-03" db="EMBL/GenBank/DDBJ databases">
        <title>Sequencing analysis of Lobularia maritima chloroplast DNA.</title>
        <authorList>
            <person name="Hosouchi T."/>
            <person name="Tsuruoka H."/>
            <person name="Kotani H."/>
        </authorList>
    </citation>
    <scope>NUCLEOTIDE SEQUENCE [LARGE SCALE GENOMIC DNA]</scope>
</reference>
<protein>
    <recommendedName>
        <fullName evidence="1">Cytochrome b6-f complex subunit 6</fullName>
    </recommendedName>
    <alternativeName>
        <fullName evidence="1">Cytochrome b6-f complex subunit PetL</fullName>
    </alternativeName>
    <alternativeName>
        <fullName evidence="1">Cytochrome b6-f complex subunit VI</fullName>
    </alternativeName>
</protein>